<accession>C3KVP3</accession>
<organism>
    <name type="scientific">Clostridium botulinum (strain 657 / Type Ba4)</name>
    <dbReference type="NCBI Taxonomy" id="515621"/>
    <lineage>
        <taxon>Bacteria</taxon>
        <taxon>Bacillati</taxon>
        <taxon>Bacillota</taxon>
        <taxon>Clostridia</taxon>
        <taxon>Eubacteriales</taxon>
        <taxon>Clostridiaceae</taxon>
        <taxon>Clostridium</taxon>
    </lineage>
</organism>
<reference key="1">
    <citation type="submission" date="2008-05" db="EMBL/GenBank/DDBJ databases">
        <title>Genome sequence of Clostridium botulinum Ba4 strain 657.</title>
        <authorList>
            <person name="Shrivastava S."/>
            <person name="Brown J.L."/>
            <person name="Bruce D."/>
            <person name="Detter C."/>
            <person name="Munk C."/>
            <person name="Smith L.A."/>
            <person name="Smith T.J."/>
            <person name="Sutton G."/>
            <person name="Brettin T.S."/>
        </authorList>
    </citation>
    <scope>NUCLEOTIDE SEQUENCE [LARGE SCALE GENOMIC DNA]</scope>
    <source>
        <strain>657 / Type Ba4</strain>
    </source>
</reference>
<comment type="similarity">
    <text evidence="1">Belongs to the universal ribosomal protein uL29 family.</text>
</comment>
<dbReference type="EMBL" id="CP001083">
    <property type="protein sequence ID" value="ACQ53711.1"/>
    <property type="molecule type" value="Genomic_DNA"/>
</dbReference>
<dbReference type="RefSeq" id="WP_003357691.1">
    <property type="nucleotide sequence ID" value="NC_012658.1"/>
</dbReference>
<dbReference type="SMR" id="C3KVP3"/>
<dbReference type="GeneID" id="92940242"/>
<dbReference type="KEGG" id="cbi:CLJ_B3781"/>
<dbReference type="HOGENOM" id="CLU_158491_5_2_9"/>
<dbReference type="Proteomes" id="UP000002333">
    <property type="component" value="Chromosome"/>
</dbReference>
<dbReference type="GO" id="GO:0022625">
    <property type="term" value="C:cytosolic large ribosomal subunit"/>
    <property type="evidence" value="ECO:0007669"/>
    <property type="project" value="TreeGrafter"/>
</dbReference>
<dbReference type="GO" id="GO:0003735">
    <property type="term" value="F:structural constituent of ribosome"/>
    <property type="evidence" value="ECO:0007669"/>
    <property type="project" value="InterPro"/>
</dbReference>
<dbReference type="GO" id="GO:0006412">
    <property type="term" value="P:translation"/>
    <property type="evidence" value="ECO:0007669"/>
    <property type="project" value="UniProtKB-UniRule"/>
</dbReference>
<dbReference type="CDD" id="cd00427">
    <property type="entry name" value="Ribosomal_L29_HIP"/>
    <property type="match status" value="1"/>
</dbReference>
<dbReference type="FunFam" id="1.10.287.310:FF:000001">
    <property type="entry name" value="50S ribosomal protein L29"/>
    <property type="match status" value="1"/>
</dbReference>
<dbReference type="Gene3D" id="1.10.287.310">
    <property type="match status" value="1"/>
</dbReference>
<dbReference type="HAMAP" id="MF_00374">
    <property type="entry name" value="Ribosomal_uL29"/>
    <property type="match status" value="1"/>
</dbReference>
<dbReference type="InterPro" id="IPR050063">
    <property type="entry name" value="Ribosomal_protein_uL29"/>
</dbReference>
<dbReference type="InterPro" id="IPR001854">
    <property type="entry name" value="Ribosomal_uL29"/>
</dbReference>
<dbReference type="InterPro" id="IPR018254">
    <property type="entry name" value="Ribosomal_uL29_CS"/>
</dbReference>
<dbReference type="InterPro" id="IPR036049">
    <property type="entry name" value="Ribosomal_uL29_sf"/>
</dbReference>
<dbReference type="NCBIfam" id="TIGR00012">
    <property type="entry name" value="L29"/>
    <property type="match status" value="1"/>
</dbReference>
<dbReference type="PANTHER" id="PTHR10916">
    <property type="entry name" value="60S RIBOSOMAL PROTEIN L35/50S RIBOSOMAL PROTEIN L29"/>
    <property type="match status" value="1"/>
</dbReference>
<dbReference type="PANTHER" id="PTHR10916:SF0">
    <property type="entry name" value="LARGE RIBOSOMAL SUBUNIT PROTEIN UL29C"/>
    <property type="match status" value="1"/>
</dbReference>
<dbReference type="Pfam" id="PF00831">
    <property type="entry name" value="Ribosomal_L29"/>
    <property type="match status" value="1"/>
</dbReference>
<dbReference type="SUPFAM" id="SSF46561">
    <property type="entry name" value="Ribosomal protein L29 (L29p)"/>
    <property type="match status" value="1"/>
</dbReference>
<dbReference type="PROSITE" id="PS00579">
    <property type="entry name" value="RIBOSOMAL_L29"/>
    <property type="match status" value="1"/>
</dbReference>
<feature type="chain" id="PRO_1000205616" description="Large ribosomal subunit protein uL29">
    <location>
        <begin position="1"/>
        <end position="70"/>
    </location>
</feature>
<gene>
    <name evidence="1" type="primary">rpmC</name>
    <name type="ordered locus">CLJ_B3781</name>
</gene>
<keyword id="KW-0687">Ribonucleoprotein</keyword>
<keyword id="KW-0689">Ribosomal protein</keyword>
<sequence length="70" mass="8327">MKARELQELRKSSPQELQSKLNDLKAELFNLRFQLATGQLENPMRIREVKKSIAQIKTILREEEIRAYQQ</sequence>
<protein>
    <recommendedName>
        <fullName evidence="1">Large ribosomal subunit protein uL29</fullName>
    </recommendedName>
    <alternativeName>
        <fullName evidence="2">50S ribosomal protein L29</fullName>
    </alternativeName>
</protein>
<proteinExistence type="inferred from homology"/>
<name>RL29_CLOB6</name>
<evidence type="ECO:0000255" key="1">
    <source>
        <dbReference type="HAMAP-Rule" id="MF_00374"/>
    </source>
</evidence>
<evidence type="ECO:0000305" key="2"/>